<dbReference type="EC" id="1.1.1.307"/>
<dbReference type="EMBL" id="FJ957890">
    <property type="protein sequence ID" value="ACX46082.1"/>
    <property type="molecule type" value="Genomic_DNA"/>
</dbReference>
<dbReference type="EMBL" id="FJ957891">
    <property type="protein sequence ID" value="ACX46083.1"/>
    <property type="molecule type" value="Genomic_DNA"/>
</dbReference>
<dbReference type="EMBL" id="BA000050">
    <property type="protein sequence ID" value="BAE57985.1"/>
    <property type="molecule type" value="Genomic_DNA"/>
</dbReference>
<dbReference type="RefSeq" id="XP_001819987.1">
    <property type="nucleotide sequence ID" value="XM_001819935.2"/>
</dbReference>
<dbReference type="SMR" id="Q2UKD0"/>
<dbReference type="STRING" id="510516.Q2UKD0"/>
<dbReference type="EnsemblFungi" id="BAE57985">
    <property type="protein sequence ID" value="BAE57985"/>
    <property type="gene ID" value="AO090003000859"/>
</dbReference>
<dbReference type="GeneID" id="5991970"/>
<dbReference type="KEGG" id="aor:AO090003000859"/>
<dbReference type="VEuPathDB" id="FungiDB:AO090003000859"/>
<dbReference type="HOGENOM" id="CLU_023205_0_0_1"/>
<dbReference type="OMA" id="VHWPSEG"/>
<dbReference type="OrthoDB" id="96837at5052"/>
<dbReference type="UniPathway" id="UPA00810"/>
<dbReference type="Proteomes" id="UP000006564">
    <property type="component" value="Chromosome 2"/>
</dbReference>
<dbReference type="GO" id="GO:0005576">
    <property type="term" value="C:extracellular region"/>
    <property type="evidence" value="ECO:0000314"/>
    <property type="project" value="AspGD"/>
</dbReference>
<dbReference type="GO" id="GO:0032866">
    <property type="term" value="F:D-xylose reductase (NADPH) activity"/>
    <property type="evidence" value="ECO:0007669"/>
    <property type="project" value="InterPro"/>
</dbReference>
<dbReference type="GO" id="GO:0042843">
    <property type="term" value="P:D-xylose catabolic process"/>
    <property type="evidence" value="ECO:0007669"/>
    <property type="project" value="UniProtKB-UniPathway"/>
</dbReference>
<dbReference type="CDD" id="cd19115">
    <property type="entry name" value="AKR_AKR2D1"/>
    <property type="match status" value="1"/>
</dbReference>
<dbReference type="FunFam" id="3.20.20.100:FF:000007">
    <property type="entry name" value="NAD(P)H-dependent D-xylose reductase xyl1"/>
    <property type="match status" value="1"/>
</dbReference>
<dbReference type="Gene3D" id="3.20.20.100">
    <property type="entry name" value="NADP-dependent oxidoreductase domain"/>
    <property type="match status" value="1"/>
</dbReference>
<dbReference type="InterPro" id="IPR020471">
    <property type="entry name" value="AKR"/>
</dbReference>
<dbReference type="InterPro" id="IPR044487">
    <property type="entry name" value="AKR2D"/>
</dbReference>
<dbReference type="InterPro" id="IPR018170">
    <property type="entry name" value="Aldo/ket_reductase_CS"/>
</dbReference>
<dbReference type="InterPro" id="IPR023210">
    <property type="entry name" value="NADP_OxRdtase_dom"/>
</dbReference>
<dbReference type="InterPro" id="IPR036812">
    <property type="entry name" value="NADP_OxRdtase_dom_sf"/>
</dbReference>
<dbReference type="PANTHER" id="PTHR11732">
    <property type="entry name" value="ALDO/KETO REDUCTASE"/>
    <property type="match status" value="1"/>
</dbReference>
<dbReference type="Pfam" id="PF00248">
    <property type="entry name" value="Aldo_ket_red"/>
    <property type="match status" value="1"/>
</dbReference>
<dbReference type="PIRSF" id="PIRSF000097">
    <property type="entry name" value="AKR"/>
    <property type="match status" value="1"/>
</dbReference>
<dbReference type="PRINTS" id="PR00069">
    <property type="entry name" value="ALDKETRDTASE"/>
</dbReference>
<dbReference type="SUPFAM" id="SSF51430">
    <property type="entry name" value="NAD(P)-linked oxidoreductase"/>
    <property type="match status" value="1"/>
</dbReference>
<dbReference type="PROSITE" id="PS00798">
    <property type="entry name" value="ALDOKETO_REDUCTASE_1"/>
    <property type="match status" value="1"/>
</dbReference>
<dbReference type="PROSITE" id="PS00062">
    <property type="entry name" value="ALDOKETO_REDUCTASE_2"/>
    <property type="match status" value="1"/>
</dbReference>
<dbReference type="PROSITE" id="PS00063">
    <property type="entry name" value="ALDOKETO_REDUCTASE_3"/>
    <property type="match status" value="1"/>
</dbReference>
<organism>
    <name type="scientific">Aspergillus oryzae (strain ATCC 42149 / RIB 40)</name>
    <name type="common">Yellow koji mold</name>
    <dbReference type="NCBI Taxonomy" id="510516"/>
    <lineage>
        <taxon>Eukaryota</taxon>
        <taxon>Fungi</taxon>
        <taxon>Dikarya</taxon>
        <taxon>Ascomycota</taxon>
        <taxon>Pezizomycotina</taxon>
        <taxon>Eurotiomycetes</taxon>
        <taxon>Eurotiomycetidae</taxon>
        <taxon>Eurotiales</taxon>
        <taxon>Aspergillaceae</taxon>
        <taxon>Aspergillus</taxon>
        <taxon>Aspergillus subgen. Circumdati</taxon>
    </lineage>
</organism>
<sequence>MASPTVKLNSGHDMPLVGFGLWKVNNETCADQVYEAIKAGYRLFDGACDYGNEVECGQGVARAIKEGIVKREELFIVSKLWNSFHEGDRVEPICRKQLADWGVDYFDLYIVHFPVALKYVDPAVRYPPGWNSESGKIEFSNATIQETWTAMESLVDKKLARSIGVSNFSAQLLMDLLRYARVRPATLQIEHHPYLTQPRLVEYAQKEGIAVTAYSSFGPLSFLELEVKNAVDTPPLFEHNTIKSLAEKYGKTPAQVLLRWATQRGIAVIPKSNNPTRLSQNLEVTGWDLEKSELEAISSLDKGLRFNDPIGYGMYVPIF</sequence>
<evidence type="ECO:0000250" key="1"/>
<evidence type="ECO:0000305" key="2"/>
<gene>
    <name type="primary">xyl1</name>
    <name type="synonym">XR</name>
    <name type="ORF">AO090003000859</name>
</gene>
<accession>Q2UKD0</accession>
<proteinExistence type="inferred from homology"/>
<comment type="function">
    <text evidence="1">Catalyzes the initial reaction in the xylose utilization pathway by reducing D-xylose into xylitol. Xylose is a major component of hemicelluloses such as xylan. Most fungi utilize D-xylose via three enzymatic reactions, xylose reductase (XR), xylitol dehydrogenase (XDH), and xylulokinase, to form xylulose 5-phosphate, which enters pentose phosphate pathway (By similarity).</text>
</comment>
<comment type="catalytic activity">
    <reaction>
        <text>xylitol + NAD(+) = D-xylose + NADH + H(+)</text>
        <dbReference type="Rhea" id="RHEA:27441"/>
        <dbReference type="ChEBI" id="CHEBI:15378"/>
        <dbReference type="ChEBI" id="CHEBI:17151"/>
        <dbReference type="ChEBI" id="CHEBI:53455"/>
        <dbReference type="ChEBI" id="CHEBI:57540"/>
        <dbReference type="ChEBI" id="CHEBI:57945"/>
        <dbReference type="EC" id="1.1.1.307"/>
    </reaction>
</comment>
<comment type="catalytic activity">
    <reaction>
        <text>xylitol + NADP(+) = D-xylose + NADPH + H(+)</text>
        <dbReference type="Rhea" id="RHEA:27445"/>
        <dbReference type="ChEBI" id="CHEBI:15378"/>
        <dbReference type="ChEBI" id="CHEBI:17151"/>
        <dbReference type="ChEBI" id="CHEBI:53455"/>
        <dbReference type="ChEBI" id="CHEBI:57783"/>
        <dbReference type="ChEBI" id="CHEBI:58349"/>
        <dbReference type="EC" id="1.1.1.307"/>
    </reaction>
</comment>
<comment type="pathway">
    <text>Carbohydrate metabolism; D-xylose degradation.</text>
</comment>
<comment type="similarity">
    <text evidence="2">Belongs to the aldo/keto reductase family.</text>
</comment>
<protein>
    <recommendedName>
        <fullName>Probable NAD(P)H-dependent D-xylose reductase xyl1</fullName>
        <shortName>XR</shortName>
        <ecNumber>1.1.1.307</ecNumber>
    </recommendedName>
</protein>
<name>XYL1_ASPOR</name>
<feature type="chain" id="PRO_0000393501" description="Probable NAD(P)H-dependent D-xylose reductase xyl1">
    <location>
        <begin position="1"/>
        <end position="319"/>
    </location>
</feature>
<feature type="active site" description="Proton donor" evidence="1">
    <location>
        <position position="50"/>
    </location>
</feature>
<feature type="binding site" evidence="1">
    <location>
        <position position="112"/>
    </location>
    <ligand>
        <name>substrate</name>
    </ligand>
</feature>
<feature type="binding site" evidence="1">
    <location>
        <begin position="166"/>
        <end position="167"/>
    </location>
    <ligand>
        <name>NAD(+)</name>
        <dbReference type="ChEBI" id="CHEBI:57540"/>
    </ligand>
</feature>
<feature type="binding site" evidence="1">
    <location>
        <begin position="215"/>
        <end position="224"/>
    </location>
    <ligand>
        <name>NAD(+)</name>
        <dbReference type="ChEBI" id="CHEBI:57540"/>
    </ligand>
</feature>
<feature type="binding site" evidence="1">
    <location>
        <begin position="271"/>
        <end position="281"/>
    </location>
    <ligand>
        <name>NAD(+)</name>
        <dbReference type="ChEBI" id="CHEBI:57540"/>
    </ligand>
</feature>
<feature type="site" description="Lowers pKa of active site Tyr" evidence="1">
    <location>
        <position position="79"/>
    </location>
</feature>
<reference key="1">
    <citation type="submission" date="2009-04" db="EMBL/GenBank/DDBJ databases">
        <title>Cloning and expression of xylose reductase gene (XR) of Aspergillus oryzae.</title>
        <authorList>
            <person name="Hong W.C."/>
            <person name="Cheng H.T."/>
            <person name="Wei L."/>
            <person name="Rong L."/>
        </authorList>
    </citation>
    <scope>NUCLEOTIDE SEQUENCE [GENOMIC DNA]</scope>
    <source>
        <strain>CICC 2012</strain>
        <strain>CICC 2120</strain>
    </source>
</reference>
<reference key="2">
    <citation type="journal article" date="2005" name="Nature">
        <title>Genome sequencing and analysis of Aspergillus oryzae.</title>
        <authorList>
            <person name="Machida M."/>
            <person name="Asai K."/>
            <person name="Sano M."/>
            <person name="Tanaka T."/>
            <person name="Kumagai T."/>
            <person name="Terai G."/>
            <person name="Kusumoto K."/>
            <person name="Arima T."/>
            <person name="Akita O."/>
            <person name="Kashiwagi Y."/>
            <person name="Abe K."/>
            <person name="Gomi K."/>
            <person name="Horiuchi H."/>
            <person name="Kitamoto K."/>
            <person name="Kobayashi T."/>
            <person name="Takeuchi M."/>
            <person name="Denning D.W."/>
            <person name="Galagan J.E."/>
            <person name="Nierman W.C."/>
            <person name="Yu J."/>
            <person name="Archer D.B."/>
            <person name="Bennett J.W."/>
            <person name="Bhatnagar D."/>
            <person name="Cleveland T.E."/>
            <person name="Fedorova N.D."/>
            <person name="Gotoh O."/>
            <person name="Horikawa H."/>
            <person name="Hosoyama A."/>
            <person name="Ichinomiya M."/>
            <person name="Igarashi R."/>
            <person name="Iwashita K."/>
            <person name="Juvvadi P.R."/>
            <person name="Kato M."/>
            <person name="Kato Y."/>
            <person name="Kin T."/>
            <person name="Kokubun A."/>
            <person name="Maeda H."/>
            <person name="Maeyama N."/>
            <person name="Maruyama J."/>
            <person name="Nagasaki H."/>
            <person name="Nakajima T."/>
            <person name="Oda K."/>
            <person name="Okada K."/>
            <person name="Paulsen I."/>
            <person name="Sakamoto K."/>
            <person name="Sawano T."/>
            <person name="Takahashi M."/>
            <person name="Takase K."/>
            <person name="Terabayashi Y."/>
            <person name="Wortman J.R."/>
            <person name="Yamada O."/>
            <person name="Yamagata Y."/>
            <person name="Anazawa H."/>
            <person name="Hata Y."/>
            <person name="Koide Y."/>
            <person name="Komori T."/>
            <person name="Koyama Y."/>
            <person name="Minetoki T."/>
            <person name="Suharnan S."/>
            <person name="Tanaka A."/>
            <person name="Isono K."/>
            <person name="Kuhara S."/>
            <person name="Ogasawara N."/>
            <person name="Kikuchi H."/>
        </authorList>
    </citation>
    <scope>NUCLEOTIDE SEQUENCE [LARGE SCALE GENOMIC DNA]</scope>
    <source>
        <strain>ATCC 42149 / RIB 40</strain>
    </source>
</reference>
<keyword id="KW-0119">Carbohydrate metabolism</keyword>
<keyword id="KW-0520">NAD</keyword>
<keyword id="KW-0521">NADP</keyword>
<keyword id="KW-0560">Oxidoreductase</keyword>
<keyword id="KW-1185">Reference proteome</keyword>
<keyword id="KW-0859">Xylose metabolism</keyword>